<reference key="1">
    <citation type="submission" date="2005-08" db="EMBL/GenBank/DDBJ databases">
        <title>Complete sequence of chromosome 1 of Nitrosospira multiformis ATCC 25196.</title>
        <authorList>
            <person name="Copeland A."/>
            <person name="Lucas S."/>
            <person name="Lapidus A."/>
            <person name="Barry K."/>
            <person name="Detter J.C."/>
            <person name="Glavina T."/>
            <person name="Hammon N."/>
            <person name="Israni S."/>
            <person name="Pitluck S."/>
            <person name="Chain P."/>
            <person name="Malfatti S."/>
            <person name="Shin M."/>
            <person name="Vergez L."/>
            <person name="Schmutz J."/>
            <person name="Larimer F."/>
            <person name="Land M."/>
            <person name="Hauser L."/>
            <person name="Kyrpides N."/>
            <person name="Lykidis A."/>
            <person name="Richardson P."/>
        </authorList>
    </citation>
    <scope>NUCLEOTIDE SEQUENCE [LARGE SCALE GENOMIC DNA]</scope>
    <source>
        <strain>ATCC 25196 / NCIMB 11849 / C 71</strain>
    </source>
</reference>
<dbReference type="EMBL" id="CP000103">
    <property type="protein sequence ID" value="ABB73321.1"/>
    <property type="molecule type" value="Genomic_DNA"/>
</dbReference>
<dbReference type="RefSeq" id="WP_011379376.1">
    <property type="nucleotide sequence ID" value="NC_007614.1"/>
</dbReference>
<dbReference type="SMR" id="Q2YD50"/>
<dbReference type="STRING" id="323848.Nmul_A0012"/>
<dbReference type="KEGG" id="nmu:Nmul_A0012"/>
<dbReference type="eggNOG" id="COG0781">
    <property type="taxonomic scope" value="Bacteria"/>
</dbReference>
<dbReference type="HOGENOM" id="CLU_087843_4_1_4"/>
<dbReference type="OrthoDB" id="9789556at2"/>
<dbReference type="Proteomes" id="UP000002718">
    <property type="component" value="Chromosome"/>
</dbReference>
<dbReference type="GO" id="GO:0005829">
    <property type="term" value="C:cytosol"/>
    <property type="evidence" value="ECO:0007669"/>
    <property type="project" value="TreeGrafter"/>
</dbReference>
<dbReference type="GO" id="GO:0003723">
    <property type="term" value="F:RNA binding"/>
    <property type="evidence" value="ECO:0007669"/>
    <property type="project" value="UniProtKB-UniRule"/>
</dbReference>
<dbReference type="GO" id="GO:0006353">
    <property type="term" value="P:DNA-templated transcription termination"/>
    <property type="evidence" value="ECO:0007669"/>
    <property type="project" value="UniProtKB-UniRule"/>
</dbReference>
<dbReference type="GO" id="GO:0031564">
    <property type="term" value="P:transcription antitermination"/>
    <property type="evidence" value="ECO:0007669"/>
    <property type="project" value="UniProtKB-KW"/>
</dbReference>
<dbReference type="Gene3D" id="1.10.940.10">
    <property type="entry name" value="NusB-like"/>
    <property type="match status" value="1"/>
</dbReference>
<dbReference type="HAMAP" id="MF_00073">
    <property type="entry name" value="NusB"/>
    <property type="match status" value="1"/>
</dbReference>
<dbReference type="InterPro" id="IPR035926">
    <property type="entry name" value="NusB-like_sf"/>
</dbReference>
<dbReference type="InterPro" id="IPR011605">
    <property type="entry name" value="NusB_fam"/>
</dbReference>
<dbReference type="InterPro" id="IPR006027">
    <property type="entry name" value="NusB_RsmB_TIM44"/>
</dbReference>
<dbReference type="NCBIfam" id="TIGR01951">
    <property type="entry name" value="nusB"/>
    <property type="match status" value="1"/>
</dbReference>
<dbReference type="PANTHER" id="PTHR11078:SF3">
    <property type="entry name" value="ANTITERMINATION NUSB DOMAIN-CONTAINING PROTEIN"/>
    <property type="match status" value="1"/>
</dbReference>
<dbReference type="PANTHER" id="PTHR11078">
    <property type="entry name" value="N UTILIZATION SUBSTANCE PROTEIN B-RELATED"/>
    <property type="match status" value="1"/>
</dbReference>
<dbReference type="Pfam" id="PF01029">
    <property type="entry name" value="NusB"/>
    <property type="match status" value="1"/>
</dbReference>
<dbReference type="SUPFAM" id="SSF48013">
    <property type="entry name" value="NusB-like"/>
    <property type="match status" value="1"/>
</dbReference>
<organism>
    <name type="scientific">Nitrosospira multiformis (strain ATCC 25196 / NCIMB 11849 / C 71)</name>
    <dbReference type="NCBI Taxonomy" id="323848"/>
    <lineage>
        <taxon>Bacteria</taxon>
        <taxon>Pseudomonadati</taxon>
        <taxon>Pseudomonadota</taxon>
        <taxon>Betaproteobacteria</taxon>
        <taxon>Nitrosomonadales</taxon>
        <taxon>Nitrosomonadaceae</taxon>
        <taxon>Nitrosospira</taxon>
    </lineage>
</organism>
<evidence type="ECO:0000255" key="1">
    <source>
        <dbReference type="HAMAP-Rule" id="MF_00073"/>
    </source>
</evidence>
<evidence type="ECO:0000256" key="2">
    <source>
        <dbReference type="SAM" id="MobiDB-lite"/>
    </source>
</evidence>
<gene>
    <name evidence="1" type="primary">nusB</name>
    <name type="ordered locus">Nmul_A0012</name>
</gene>
<keyword id="KW-1185">Reference proteome</keyword>
<keyword id="KW-0694">RNA-binding</keyword>
<keyword id="KW-0804">Transcription</keyword>
<keyword id="KW-0889">Transcription antitermination</keyword>
<keyword id="KW-0805">Transcription regulation</keyword>
<accession>Q2YD50</accession>
<sequence length="158" mass="17781">MKRVEKRAEKQGRGTARKSRRRLARELALQGLYQWCVAGGSAGTIEAQLRDTEEFPKTDEEYFSRLLHGVLMQAPELEKEIQPCLDRPFNELSPVEISILLLGAYELERHPEIPYRAVINEAVELAKAYGGTHGHKYVNGVLDKLAVKLRAAEIGAKI</sequence>
<comment type="function">
    <text evidence="1">Involved in transcription antitermination. Required for transcription of ribosomal RNA (rRNA) genes. Binds specifically to the boxA antiterminator sequence of the ribosomal RNA (rrn) operons.</text>
</comment>
<comment type="similarity">
    <text evidence="1">Belongs to the NusB family.</text>
</comment>
<feature type="chain" id="PRO_0000265553" description="Transcription antitermination protein NusB">
    <location>
        <begin position="1"/>
        <end position="158"/>
    </location>
</feature>
<feature type="region of interest" description="Disordered" evidence="2">
    <location>
        <begin position="1"/>
        <end position="20"/>
    </location>
</feature>
<feature type="compositionally biased region" description="Basic and acidic residues" evidence="2">
    <location>
        <begin position="1"/>
        <end position="12"/>
    </location>
</feature>
<protein>
    <recommendedName>
        <fullName evidence="1">Transcription antitermination protein NusB</fullName>
    </recommendedName>
    <alternativeName>
        <fullName evidence="1">Antitermination factor NusB</fullName>
    </alternativeName>
</protein>
<name>NUSB_NITMU</name>
<proteinExistence type="inferred from homology"/>